<reference key="1">
    <citation type="submission" date="2009-01" db="EMBL/GenBank/DDBJ databases">
        <title>Complete sequence of Anaeromyxobacter dehalogenans 2CP-1.</title>
        <authorList>
            <person name="Lucas S."/>
            <person name="Copeland A."/>
            <person name="Lapidus A."/>
            <person name="Glavina del Rio T."/>
            <person name="Dalin E."/>
            <person name="Tice H."/>
            <person name="Bruce D."/>
            <person name="Goodwin L."/>
            <person name="Pitluck S."/>
            <person name="Saunders E."/>
            <person name="Brettin T."/>
            <person name="Detter J.C."/>
            <person name="Han C."/>
            <person name="Larimer F."/>
            <person name="Land M."/>
            <person name="Hauser L."/>
            <person name="Kyrpides N."/>
            <person name="Ovchinnikova G."/>
            <person name="Beliaev A.S."/>
            <person name="Richardson P."/>
        </authorList>
    </citation>
    <scope>NUCLEOTIDE SEQUENCE [LARGE SCALE GENOMIC DNA]</scope>
    <source>
        <strain>2CP-1 / ATCC BAA-258</strain>
    </source>
</reference>
<accession>B8JDE1</accession>
<gene>
    <name evidence="1" type="primary">recO</name>
    <name type="ordered locus">A2cp1_2653</name>
</gene>
<feature type="chain" id="PRO_1000193350" description="DNA repair protein RecO">
    <location>
        <begin position="1"/>
        <end position="254"/>
    </location>
</feature>
<name>RECO_ANAD2</name>
<evidence type="ECO:0000255" key="1">
    <source>
        <dbReference type="HAMAP-Rule" id="MF_00201"/>
    </source>
</evidence>
<protein>
    <recommendedName>
        <fullName evidence="1">DNA repair protein RecO</fullName>
    </recommendedName>
    <alternativeName>
        <fullName evidence="1">Recombination protein O</fullName>
    </alternativeName>
</protein>
<organism>
    <name type="scientific">Anaeromyxobacter dehalogenans (strain 2CP-1 / ATCC BAA-258)</name>
    <dbReference type="NCBI Taxonomy" id="455488"/>
    <lineage>
        <taxon>Bacteria</taxon>
        <taxon>Pseudomonadati</taxon>
        <taxon>Myxococcota</taxon>
        <taxon>Myxococcia</taxon>
        <taxon>Myxococcales</taxon>
        <taxon>Cystobacterineae</taxon>
        <taxon>Anaeromyxobacteraceae</taxon>
        <taxon>Anaeromyxobacter</taxon>
    </lineage>
</organism>
<sequence>MDRAKLTGVVLRAVDYGESDRVVTLLTAERGKVSAFARGARASRRRFGGALEPFTLLSAEVRERSGSDLLGLDSVSVVRGFGALRGDLGRIACAGYAAELARELVRDHQPHDELFELLVAYLDALDAGPPRPAALRAFELGALRAAGLMPRLDACARCGAPVGEGPVRFDAGEGGALCAGCAPGVPRTLPLAAGTLAALLRLQDGGLAAAASEPLAPPAGREAREALTAFLEHHLGRRLAARRFLDEIGPLLGA</sequence>
<comment type="function">
    <text evidence="1">Involved in DNA repair and RecF pathway recombination.</text>
</comment>
<comment type="similarity">
    <text evidence="1">Belongs to the RecO family.</text>
</comment>
<dbReference type="EMBL" id="CP001359">
    <property type="protein sequence ID" value="ACL65990.1"/>
    <property type="molecule type" value="Genomic_DNA"/>
</dbReference>
<dbReference type="RefSeq" id="WP_012633769.1">
    <property type="nucleotide sequence ID" value="NC_011891.1"/>
</dbReference>
<dbReference type="SMR" id="B8JDE1"/>
<dbReference type="KEGG" id="acp:A2cp1_2653"/>
<dbReference type="HOGENOM" id="CLU_066632_2_0_7"/>
<dbReference type="Proteomes" id="UP000007089">
    <property type="component" value="Chromosome"/>
</dbReference>
<dbReference type="GO" id="GO:0043590">
    <property type="term" value="C:bacterial nucleoid"/>
    <property type="evidence" value="ECO:0007669"/>
    <property type="project" value="TreeGrafter"/>
</dbReference>
<dbReference type="GO" id="GO:0006310">
    <property type="term" value="P:DNA recombination"/>
    <property type="evidence" value="ECO:0007669"/>
    <property type="project" value="UniProtKB-UniRule"/>
</dbReference>
<dbReference type="GO" id="GO:0006302">
    <property type="term" value="P:double-strand break repair"/>
    <property type="evidence" value="ECO:0007669"/>
    <property type="project" value="TreeGrafter"/>
</dbReference>
<dbReference type="Gene3D" id="2.40.50.140">
    <property type="entry name" value="Nucleic acid-binding proteins"/>
    <property type="match status" value="1"/>
</dbReference>
<dbReference type="Gene3D" id="1.20.1440.120">
    <property type="entry name" value="Recombination protein O, C-terminal domain"/>
    <property type="match status" value="1"/>
</dbReference>
<dbReference type="HAMAP" id="MF_00201">
    <property type="entry name" value="RecO"/>
    <property type="match status" value="1"/>
</dbReference>
<dbReference type="InterPro" id="IPR037278">
    <property type="entry name" value="ARFGAP/RecO"/>
</dbReference>
<dbReference type="InterPro" id="IPR022572">
    <property type="entry name" value="DNA_rep/recomb_RecO_N"/>
</dbReference>
<dbReference type="InterPro" id="IPR012340">
    <property type="entry name" value="NA-bd_OB-fold"/>
</dbReference>
<dbReference type="InterPro" id="IPR003717">
    <property type="entry name" value="RecO"/>
</dbReference>
<dbReference type="InterPro" id="IPR042242">
    <property type="entry name" value="RecO_C"/>
</dbReference>
<dbReference type="NCBIfam" id="TIGR00613">
    <property type="entry name" value="reco"/>
    <property type="match status" value="1"/>
</dbReference>
<dbReference type="PANTHER" id="PTHR33991">
    <property type="entry name" value="DNA REPAIR PROTEIN RECO"/>
    <property type="match status" value="1"/>
</dbReference>
<dbReference type="PANTHER" id="PTHR33991:SF1">
    <property type="entry name" value="DNA REPAIR PROTEIN RECO"/>
    <property type="match status" value="1"/>
</dbReference>
<dbReference type="Pfam" id="PF02565">
    <property type="entry name" value="RecO_C"/>
    <property type="match status" value="1"/>
</dbReference>
<dbReference type="Pfam" id="PF11967">
    <property type="entry name" value="RecO_N"/>
    <property type="match status" value="1"/>
</dbReference>
<dbReference type="SUPFAM" id="SSF57863">
    <property type="entry name" value="ArfGap/RecO-like zinc finger"/>
    <property type="match status" value="1"/>
</dbReference>
<dbReference type="SUPFAM" id="SSF50249">
    <property type="entry name" value="Nucleic acid-binding proteins"/>
    <property type="match status" value="1"/>
</dbReference>
<proteinExistence type="inferred from homology"/>
<keyword id="KW-0227">DNA damage</keyword>
<keyword id="KW-0233">DNA recombination</keyword>
<keyword id="KW-0234">DNA repair</keyword>